<proteinExistence type="inferred from homology"/>
<feature type="chain" id="PRO_0000346212" description="D-ribose pyranase">
    <location>
        <begin position="1"/>
        <end position="139"/>
    </location>
</feature>
<feature type="active site" description="Proton donor" evidence="1">
    <location>
        <position position="20"/>
    </location>
</feature>
<feature type="binding site" evidence="1">
    <location>
        <position position="28"/>
    </location>
    <ligand>
        <name>substrate</name>
    </ligand>
</feature>
<feature type="binding site" evidence="1">
    <location>
        <position position="106"/>
    </location>
    <ligand>
        <name>substrate</name>
    </ligand>
</feature>
<feature type="binding site" evidence="1">
    <location>
        <begin position="128"/>
        <end position="130"/>
    </location>
    <ligand>
        <name>substrate</name>
    </ligand>
</feature>
<protein>
    <recommendedName>
        <fullName evidence="1">D-ribose pyranase</fullName>
        <ecNumber evidence="1">5.4.99.62</ecNumber>
    </recommendedName>
</protein>
<evidence type="ECO:0000255" key="1">
    <source>
        <dbReference type="HAMAP-Rule" id="MF_01661"/>
    </source>
</evidence>
<gene>
    <name evidence="1" type="primary">rbsD</name>
    <name type="ordered locus">HSM_0089</name>
</gene>
<sequence>MKKTKLLNASLSHYIATLGHTDSLVICDAGLPISNQVERVDLALEAGVPGFLQTVDVVISEMFVEHAVVAKEIREKNPQIHDALLDSLRKLSEQQGNCIAVEYVEHEEFKVLSSESKAAVRTGEFSPYANIILYSGVPF</sequence>
<accession>B0UV47</accession>
<reference key="1">
    <citation type="submission" date="2008-02" db="EMBL/GenBank/DDBJ databases">
        <title>Complete sequence of Haemophilus somnus 2336.</title>
        <authorList>
            <consortium name="US DOE Joint Genome Institute"/>
            <person name="Siddaramappa S."/>
            <person name="Duncan A.J."/>
            <person name="Challacombe J.F."/>
            <person name="Rainey D."/>
            <person name="Gillaspy A.F."/>
            <person name="Carson M."/>
            <person name="Gipson J."/>
            <person name="Gipson M."/>
            <person name="Bruce D."/>
            <person name="Detter J.C."/>
            <person name="Han C.S."/>
            <person name="Land M."/>
            <person name="Tapia R."/>
            <person name="Thompson L.S."/>
            <person name="Orvis J."/>
            <person name="Zaitshik J."/>
            <person name="Barnes G."/>
            <person name="Brettin T.S."/>
            <person name="Dyer D.W."/>
            <person name="Inzana T.J."/>
        </authorList>
    </citation>
    <scope>NUCLEOTIDE SEQUENCE [LARGE SCALE GENOMIC DNA]</scope>
    <source>
        <strain>2336</strain>
    </source>
</reference>
<name>RBSD_HISS2</name>
<comment type="function">
    <text evidence="1">Catalyzes the interconversion of beta-pyran and beta-furan forms of D-ribose.</text>
</comment>
<comment type="catalytic activity">
    <reaction evidence="1">
        <text>beta-D-ribopyranose = beta-D-ribofuranose</text>
        <dbReference type="Rhea" id="RHEA:25432"/>
        <dbReference type="ChEBI" id="CHEBI:27476"/>
        <dbReference type="ChEBI" id="CHEBI:47002"/>
        <dbReference type="EC" id="5.4.99.62"/>
    </reaction>
</comment>
<comment type="pathway">
    <text evidence="1">Carbohydrate metabolism; D-ribose degradation; D-ribose 5-phosphate from beta-D-ribopyranose: step 1/2.</text>
</comment>
<comment type="subunit">
    <text evidence="1">Homodecamer.</text>
</comment>
<comment type="subcellular location">
    <subcellularLocation>
        <location evidence="1">Cytoplasm</location>
    </subcellularLocation>
</comment>
<comment type="similarity">
    <text evidence="1">Belongs to the RbsD / FucU family. RbsD subfamily.</text>
</comment>
<keyword id="KW-0119">Carbohydrate metabolism</keyword>
<keyword id="KW-0963">Cytoplasm</keyword>
<keyword id="KW-0413">Isomerase</keyword>
<organism>
    <name type="scientific">Histophilus somni (strain 2336)</name>
    <name type="common">Haemophilus somnus</name>
    <dbReference type="NCBI Taxonomy" id="228400"/>
    <lineage>
        <taxon>Bacteria</taxon>
        <taxon>Pseudomonadati</taxon>
        <taxon>Pseudomonadota</taxon>
        <taxon>Gammaproteobacteria</taxon>
        <taxon>Pasteurellales</taxon>
        <taxon>Pasteurellaceae</taxon>
        <taxon>Histophilus</taxon>
    </lineage>
</organism>
<dbReference type="EC" id="5.4.99.62" evidence="1"/>
<dbReference type="EMBL" id="CP000947">
    <property type="protein sequence ID" value="ACA32567.1"/>
    <property type="molecule type" value="Genomic_DNA"/>
</dbReference>
<dbReference type="RefSeq" id="WP_012341700.1">
    <property type="nucleotide sequence ID" value="NC_010519.1"/>
</dbReference>
<dbReference type="SMR" id="B0UV47"/>
<dbReference type="STRING" id="228400.HSM_0089"/>
<dbReference type="GeneID" id="31486365"/>
<dbReference type="KEGG" id="hsm:HSM_0089"/>
<dbReference type="HOGENOM" id="CLU_135498_0_0_6"/>
<dbReference type="UniPathway" id="UPA00916">
    <property type="reaction ID" value="UER00888"/>
</dbReference>
<dbReference type="GO" id="GO:0005829">
    <property type="term" value="C:cytosol"/>
    <property type="evidence" value="ECO:0007669"/>
    <property type="project" value="TreeGrafter"/>
</dbReference>
<dbReference type="GO" id="GO:0062193">
    <property type="term" value="F:D-ribose pyranase activity"/>
    <property type="evidence" value="ECO:0007669"/>
    <property type="project" value="UniProtKB-EC"/>
</dbReference>
<dbReference type="GO" id="GO:0016872">
    <property type="term" value="F:intramolecular lyase activity"/>
    <property type="evidence" value="ECO:0007669"/>
    <property type="project" value="UniProtKB-UniRule"/>
</dbReference>
<dbReference type="GO" id="GO:0048029">
    <property type="term" value="F:monosaccharide binding"/>
    <property type="evidence" value="ECO:0007669"/>
    <property type="project" value="InterPro"/>
</dbReference>
<dbReference type="GO" id="GO:0019303">
    <property type="term" value="P:D-ribose catabolic process"/>
    <property type="evidence" value="ECO:0007669"/>
    <property type="project" value="UniProtKB-UniRule"/>
</dbReference>
<dbReference type="Gene3D" id="3.40.1650.10">
    <property type="entry name" value="RbsD-like domain"/>
    <property type="match status" value="1"/>
</dbReference>
<dbReference type="HAMAP" id="MF_01661">
    <property type="entry name" value="D_rib_pyranase"/>
    <property type="match status" value="1"/>
</dbReference>
<dbReference type="InterPro" id="IPR023064">
    <property type="entry name" value="D-ribose_pyranase"/>
</dbReference>
<dbReference type="InterPro" id="IPR023750">
    <property type="entry name" value="RbsD-like_sf"/>
</dbReference>
<dbReference type="InterPro" id="IPR007721">
    <property type="entry name" value="RbsD_FucU"/>
</dbReference>
<dbReference type="NCBIfam" id="NF008761">
    <property type="entry name" value="PRK11797.1"/>
    <property type="match status" value="1"/>
</dbReference>
<dbReference type="PANTHER" id="PTHR37831">
    <property type="entry name" value="D-RIBOSE PYRANASE"/>
    <property type="match status" value="1"/>
</dbReference>
<dbReference type="PANTHER" id="PTHR37831:SF1">
    <property type="entry name" value="D-RIBOSE PYRANASE"/>
    <property type="match status" value="1"/>
</dbReference>
<dbReference type="Pfam" id="PF05025">
    <property type="entry name" value="RbsD_FucU"/>
    <property type="match status" value="1"/>
</dbReference>
<dbReference type="SUPFAM" id="SSF102546">
    <property type="entry name" value="RbsD-like"/>
    <property type="match status" value="1"/>
</dbReference>